<reference key="1">
    <citation type="journal article" date="2008" name="BMC Genomics">
        <title>Acidithiobacillus ferrooxidans metabolism: from genome sequence to industrial applications.</title>
        <authorList>
            <person name="Valdes J."/>
            <person name="Pedroso I."/>
            <person name="Quatrini R."/>
            <person name="Dodson R.J."/>
            <person name="Tettelin H."/>
            <person name="Blake R. II"/>
            <person name="Eisen J.A."/>
            <person name="Holmes D.S."/>
        </authorList>
    </citation>
    <scope>NUCLEOTIDE SEQUENCE [LARGE SCALE GENOMIC DNA]</scope>
    <source>
        <strain>ATCC 23270 / DSM 14882 / CIP 104768 / NCIMB 8455</strain>
    </source>
</reference>
<name>DNAJ_ACIF2</name>
<comment type="function">
    <text evidence="1">Participates actively in the response to hyperosmotic and heat shock by preventing the aggregation of stress-denatured proteins and by disaggregating proteins, also in an autonomous, DnaK-independent fashion. Unfolded proteins bind initially to DnaJ; upon interaction with the DnaJ-bound protein, DnaK hydrolyzes its bound ATP, resulting in the formation of a stable complex. GrpE releases ADP from DnaK; ATP binding to DnaK triggers the release of the substrate protein, thus completing the reaction cycle. Several rounds of ATP-dependent interactions between DnaJ, DnaK and GrpE are required for fully efficient folding. Also involved, together with DnaK and GrpE, in the DNA replication of plasmids through activation of initiation proteins.</text>
</comment>
<comment type="cofactor">
    <cofactor evidence="1">
        <name>Zn(2+)</name>
        <dbReference type="ChEBI" id="CHEBI:29105"/>
    </cofactor>
    <text evidence="1">Binds 2 Zn(2+) ions per monomer.</text>
</comment>
<comment type="subunit">
    <text evidence="1">Homodimer.</text>
</comment>
<comment type="subcellular location">
    <subcellularLocation>
        <location evidence="1">Cytoplasm</location>
    </subcellularLocation>
</comment>
<comment type="domain">
    <text evidence="1">The J domain is necessary and sufficient to stimulate DnaK ATPase activity. Zinc center 1 plays an important role in the autonomous, DnaK-independent chaperone activity of DnaJ. Zinc center 2 is essential for interaction with DnaK and for DnaJ activity.</text>
</comment>
<comment type="similarity">
    <text evidence="1">Belongs to the DnaJ family.</text>
</comment>
<protein>
    <recommendedName>
        <fullName evidence="1">Chaperone protein DnaJ</fullName>
    </recommendedName>
</protein>
<gene>
    <name evidence="1" type="primary">dnaJ</name>
    <name type="ordered locus">AFE_2664</name>
</gene>
<accession>B7J7X8</accession>
<organism>
    <name type="scientific">Acidithiobacillus ferrooxidans (strain ATCC 23270 / DSM 14882 / CIP 104768 / NCIMB 8455)</name>
    <name type="common">Ferrobacillus ferrooxidans (strain ATCC 23270)</name>
    <dbReference type="NCBI Taxonomy" id="243159"/>
    <lineage>
        <taxon>Bacteria</taxon>
        <taxon>Pseudomonadati</taxon>
        <taxon>Pseudomonadota</taxon>
        <taxon>Acidithiobacillia</taxon>
        <taxon>Acidithiobacillales</taxon>
        <taxon>Acidithiobacillaceae</taxon>
        <taxon>Acidithiobacillus</taxon>
    </lineage>
</organism>
<keyword id="KW-0143">Chaperone</keyword>
<keyword id="KW-0963">Cytoplasm</keyword>
<keyword id="KW-0235">DNA replication</keyword>
<keyword id="KW-0479">Metal-binding</keyword>
<keyword id="KW-1185">Reference proteome</keyword>
<keyword id="KW-0677">Repeat</keyword>
<keyword id="KW-0346">Stress response</keyword>
<keyword id="KW-0862">Zinc</keyword>
<keyword id="KW-0863">Zinc-finger</keyword>
<evidence type="ECO:0000255" key="1">
    <source>
        <dbReference type="HAMAP-Rule" id="MF_01152"/>
    </source>
</evidence>
<sequence>MATRDYYEVLEISRTADDGEIKKSYRRLAMRYHPDRNPDDASAEERFKEISAAYEVLSDPQKRQAYDRFGHAGVNGGGGGPGAGFGGGGGGFGDVFSDLFEQAFGGGFRGQDSGRGADLRYELELTLEEAALGKEVTIQIPSSATCEVCRGSGAKPGSAVEDCATCGGRGQVRMVQGFFSVTRPCPQCNGSGKVIKEPCTNCHGHGRVRRNRDLQVKVPAGVDTGDRIRLNGEGEAGERGGPAGDLYIQVRVLPHALFERDGDDLHCAVPVQFTTMAMGGELEVPTLTGRAKVQIAPGTQSGAVFRLRGKGIKGVRSKLNGDLHCQLQVEVPVHLSARQKELLEEFAREGGDNIQHPQQESWWNKAKDFFDRMGL</sequence>
<dbReference type="EMBL" id="CP001219">
    <property type="protein sequence ID" value="ACK80803.1"/>
    <property type="molecule type" value="Genomic_DNA"/>
</dbReference>
<dbReference type="RefSeq" id="WP_012537323.1">
    <property type="nucleotide sequence ID" value="NC_011761.1"/>
</dbReference>
<dbReference type="SMR" id="B7J7X8"/>
<dbReference type="STRING" id="243159.AFE_2664"/>
<dbReference type="PaxDb" id="243159-AFE_2664"/>
<dbReference type="GeneID" id="65281709"/>
<dbReference type="KEGG" id="afr:AFE_2664"/>
<dbReference type="eggNOG" id="COG0484">
    <property type="taxonomic scope" value="Bacteria"/>
</dbReference>
<dbReference type="HOGENOM" id="CLU_017633_0_7_6"/>
<dbReference type="Proteomes" id="UP000001362">
    <property type="component" value="Chromosome"/>
</dbReference>
<dbReference type="GO" id="GO:0005737">
    <property type="term" value="C:cytoplasm"/>
    <property type="evidence" value="ECO:0007669"/>
    <property type="project" value="UniProtKB-SubCell"/>
</dbReference>
<dbReference type="GO" id="GO:0005524">
    <property type="term" value="F:ATP binding"/>
    <property type="evidence" value="ECO:0007669"/>
    <property type="project" value="InterPro"/>
</dbReference>
<dbReference type="GO" id="GO:0031072">
    <property type="term" value="F:heat shock protein binding"/>
    <property type="evidence" value="ECO:0007669"/>
    <property type="project" value="InterPro"/>
</dbReference>
<dbReference type="GO" id="GO:0051082">
    <property type="term" value="F:unfolded protein binding"/>
    <property type="evidence" value="ECO:0007669"/>
    <property type="project" value="UniProtKB-UniRule"/>
</dbReference>
<dbReference type="GO" id="GO:0008270">
    <property type="term" value="F:zinc ion binding"/>
    <property type="evidence" value="ECO:0007669"/>
    <property type="project" value="UniProtKB-UniRule"/>
</dbReference>
<dbReference type="GO" id="GO:0051085">
    <property type="term" value="P:chaperone cofactor-dependent protein refolding"/>
    <property type="evidence" value="ECO:0007669"/>
    <property type="project" value="TreeGrafter"/>
</dbReference>
<dbReference type="GO" id="GO:0006260">
    <property type="term" value="P:DNA replication"/>
    <property type="evidence" value="ECO:0007669"/>
    <property type="project" value="UniProtKB-KW"/>
</dbReference>
<dbReference type="GO" id="GO:0042026">
    <property type="term" value="P:protein refolding"/>
    <property type="evidence" value="ECO:0007669"/>
    <property type="project" value="TreeGrafter"/>
</dbReference>
<dbReference type="GO" id="GO:0009408">
    <property type="term" value="P:response to heat"/>
    <property type="evidence" value="ECO:0007669"/>
    <property type="project" value="InterPro"/>
</dbReference>
<dbReference type="CDD" id="cd06257">
    <property type="entry name" value="DnaJ"/>
    <property type="match status" value="1"/>
</dbReference>
<dbReference type="CDD" id="cd10747">
    <property type="entry name" value="DnaJ_C"/>
    <property type="match status" value="1"/>
</dbReference>
<dbReference type="CDD" id="cd10719">
    <property type="entry name" value="DnaJ_zf"/>
    <property type="match status" value="1"/>
</dbReference>
<dbReference type="FunFam" id="1.10.287.110:FF:000034">
    <property type="entry name" value="Chaperone protein DnaJ"/>
    <property type="match status" value="1"/>
</dbReference>
<dbReference type="FunFam" id="2.10.230.10:FF:000002">
    <property type="entry name" value="Molecular chaperone DnaJ"/>
    <property type="match status" value="1"/>
</dbReference>
<dbReference type="FunFam" id="2.60.260.20:FF:000004">
    <property type="entry name" value="Molecular chaperone DnaJ"/>
    <property type="match status" value="1"/>
</dbReference>
<dbReference type="Gene3D" id="1.10.287.110">
    <property type="entry name" value="DnaJ domain"/>
    <property type="match status" value="1"/>
</dbReference>
<dbReference type="Gene3D" id="2.10.230.10">
    <property type="entry name" value="Heat shock protein DnaJ, cysteine-rich domain"/>
    <property type="match status" value="1"/>
</dbReference>
<dbReference type="Gene3D" id="2.60.260.20">
    <property type="entry name" value="Urease metallochaperone UreE, N-terminal domain"/>
    <property type="match status" value="2"/>
</dbReference>
<dbReference type="HAMAP" id="MF_01152">
    <property type="entry name" value="DnaJ"/>
    <property type="match status" value="1"/>
</dbReference>
<dbReference type="InterPro" id="IPR012724">
    <property type="entry name" value="DnaJ"/>
</dbReference>
<dbReference type="InterPro" id="IPR002939">
    <property type="entry name" value="DnaJ_C"/>
</dbReference>
<dbReference type="InterPro" id="IPR001623">
    <property type="entry name" value="DnaJ_domain"/>
</dbReference>
<dbReference type="InterPro" id="IPR018253">
    <property type="entry name" value="DnaJ_domain_CS"/>
</dbReference>
<dbReference type="InterPro" id="IPR008971">
    <property type="entry name" value="HSP40/DnaJ_pept-bd"/>
</dbReference>
<dbReference type="InterPro" id="IPR001305">
    <property type="entry name" value="HSP_DnaJ_Cys-rich_dom"/>
</dbReference>
<dbReference type="InterPro" id="IPR036410">
    <property type="entry name" value="HSP_DnaJ_Cys-rich_dom_sf"/>
</dbReference>
<dbReference type="InterPro" id="IPR036869">
    <property type="entry name" value="J_dom_sf"/>
</dbReference>
<dbReference type="NCBIfam" id="TIGR02349">
    <property type="entry name" value="DnaJ_bact"/>
    <property type="match status" value="1"/>
</dbReference>
<dbReference type="NCBIfam" id="NF008035">
    <property type="entry name" value="PRK10767.1"/>
    <property type="match status" value="1"/>
</dbReference>
<dbReference type="PANTHER" id="PTHR43096:SF48">
    <property type="entry name" value="CHAPERONE PROTEIN DNAJ"/>
    <property type="match status" value="1"/>
</dbReference>
<dbReference type="PANTHER" id="PTHR43096">
    <property type="entry name" value="DNAJ HOMOLOG 1, MITOCHONDRIAL-RELATED"/>
    <property type="match status" value="1"/>
</dbReference>
<dbReference type="Pfam" id="PF00226">
    <property type="entry name" value="DnaJ"/>
    <property type="match status" value="1"/>
</dbReference>
<dbReference type="Pfam" id="PF01556">
    <property type="entry name" value="DnaJ_C"/>
    <property type="match status" value="1"/>
</dbReference>
<dbReference type="Pfam" id="PF00684">
    <property type="entry name" value="DnaJ_CXXCXGXG"/>
    <property type="match status" value="1"/>
</dbReference>
<dbReference type="PRINTS" id="PR00625">
    <property type="entry name" value="JDOMAIN"/>
</dbReference>
<dbReference type="SMART" id="SM00271">
    <property type="entry name" value="DnaJ"/>
    <property type="match status" value="1"/>
</dbReference>
<dbReference type="SUPFAM" id="SSF46565">
    <property type="entry name" value="Chaperone J-domain"/>
    <property type="match status" value="1"/>
</dbReference>
<dbReference type="SUPFAM" id="SSF57938">
    <property type="entry name" value="DnaJ/Hsp40 cysteine-rich domain"/>
    <property type="match status" value="1"/>
</dbReference>
<dbReference type="SUPFAM" id="SSF49493">
    <property type="entry name" value="HSP40/DnaJ peptide-binding domain"/>
    <property type="match status" value="2"/>
</dbReference>
<dbReference type="PROSITE" id="PS00636">
    <property type="entry name" value="DNAJ_1"/>
    <property type="match status" value="1"/>
</dbReference>
<dbReference type="PROSITE" id="PS50076">
    <property type="entry name" value="DNAJ_2"/>
    <property type="match status" value="1"/>
</dbReference>
<dbReference type="PROSITE" id="PS51188">
    <property type="entry name" value="ZF_CR"/>
    <property type="match status" value="1"/>
</dbReference>
<proteinExistence type="inferred from homology"/>
<feature type="chain" id="PRO_1000137653" description="Chaperone protein DnaJ">
    <location>
        <begin position="1"/>
        <end position="375"/>
    </location>
</feature>
<feature type="domain" description="J" evidence="1">
    <location>
        <begin position="5"/>
        <end position="70"/>
    </location>
</feature>
<feature type="repeat" description="CXXCXGXG motif">
    <location>
        <begin position="146"/>
        <end position="153"/>
    </location>
</feature>
<feature type="repeat" description="CXXCXGXG motif">
    <location>
        <begin position="163"/>
        <end position="170"/>
    </location>
</feature>
<feature type="repeat" description="CXXCXGXG motif">
    <location>
        <begin position="185"/>
        <end position="192"/>
    </location>
</feature>
<feature type="repeat" description="CXXCXGXG motif">
    <location>
        <begin position="199"/>
        <end position="206"/>
    </location>
</feature>
<feature type="zinc finger region" description="CR-type" evidence="1">
    <location>
        <begin position="133"/>
        <end position="211"/>
    </location>
</feature>
<feature type="binding site" evidence="1">
    <location>
        <position position="146"/>
    </location>
    <ligand>
        <name>Zn(2+)</name>
        <dbReference type="ChEBI" id="CHEBI:29105"/>
        <label>1</label>
    </ligand>
</feature>
<feature type="binding site" evidence="1">
    <location>
        <position position="149"/>
    </location>
    <ligand>
        <name>Zn(2+)</name>
        <dbReference type="ChEBI" id="CHEBI:29105"/>
        <label>1</label>
    </ligand>
</feature>
<feature type="binding site" evidence="1">
    <location>
        <position position="163"/>
    </location>
    <ligand>
        <name>Zn(2+)</name>
        <dbReference type="ChEBI" id="CHEBI:29105"/>
        <label>2</label>
    </ligand>
</feature>
<feature type="binding site" evidence="1">
    <location>
        <position position="166"/>
    </location>
    <ligand>
        <name>Zn(2+)</name>
        <dbReference type="ChEBI" id="CHEBI:29105"/>
        <label>2</label>
    </ligand>
</feature>
<feature type="binding site" evidence="1">
    <location>
        <position position="185"/>
    </location>
    <ligand>
        <name>Zn(2+)</name>
        <dbReference type="ChEBI" id="CHEBI:29105"/>
        <label>2</label>
    </ligand>
</feature>
<feature type="binding site" evidence="1">
    <location>
        <position position="188"/>
    </location>
    <ligand>
        <name>Zn(2+)</name>
        <dbReference type="ChEBI" id="CHEBI:29105"/>
        <label>2</label>
    </ligand>
</feature>
<feature type="binding site" evidence="1">
    <location>
        <position position="199"/>
    </location>
    <ligand>
        <name>Zn(2+)</name>
        <dbReference type="ChEBI" id="CHEBI:29105"/>
        <label>1</label>
    </ligand>
</feature>
<feature type="binding site" evidence="1">
    <location>
        <position position="202"/>
    </location>
    <ligand>
        <name>Zn(2+)</name>
        <dbReference type="ChEBI" id="CHEBI:29105"/>
        <label>1</label>
    </ligand>
</feature>